<protein>
    <recommendedName>
        <fullName>Cytochrome c oxidase subunit 5A, mitochondrial</fullName>
    </recommendedName>
    <alternativeName>
        <fullName>Cytochrome c oxidase polypeptide Va</fullName>
    </alternativeName>
</protein>
<organism>
    <name type="scientific">Eulemur fulvus fulvus</name>
    <name type="common">Brown lemur</name>
    <dbReference type="NCBI Taxonomy" id="40322"/>
    <lineage>
        <taxon>Eukaryota</taxon>
        <taxon>Metazoa</taxon>
        <taxon>Chordata</taxon>
        <taxon>Craniata</taxon>
        <taxon>Vertebrata</taxon>
        <taxon>Euteleostomi</taxon>
        <taxon>Mammalia</taxon>
        <taxon>Eutheria</taxon>
        <taxon>Euarchontoglires</taxon>
        <taxon>Primates</taxon>
        <taxon>Strepsirrhini</taxon>
        <taxon>Lemuriformes</taxon>
        <taxon>Lemuridae</taxon>
        <taxon>Eulemur</taxon>
    </lineage>
</organism>
<comment type="function">
    <text evidence="2">Component of the cytochrome c oxidase, the last enzyme in the mitochondrial electron transport chain which drives oxidative phosphorylation. The respiratory chain contains 3 multisubunit complexes succinate dehydrogenase (complex II, CII), ubiquinol-cytochrome c oxidoreductase (cytochrome b-c1 complex, complex III, CIII) and cytochrome c oxidase (complex IV, CIV), that cooperate to transfer electrons derived from NADH and succinate to molecular oxygen, creating an electrochemical gradient over the inner membrane that drives transmembrane transport and the ATP synthase. Cytochrome c oxidase is the component of the respiratory chain that catalyzes the reduction of oxygen to water. Electrons originating from reduced cytochrome c in the intermembrane space (IMS) are transferred via the dinuclear copper A center (CU(A)) of subunit 2 and heme A of subunit 1 to the active site in subunit 1, a binuclear center (BNC) formed by heme A3 and copper B (CU(B)). The BNC reduces molecular oxygen to 2 water molecules using 4 electrons from cytochrome c in the IMS and 4 protons from the mitochondrial matrix.</text>
</comment>
<comment type="pathway">
    <text evidence="2">Energy metabolism; oxidative phosphorylation.</text>
</comment>
<comment type="subunit">
    <text evidence="1 4">Component of the cytochrome c oxidase (complex IV, CIV), a multisubunit enzyme composed of 14 subunits. The complex is composed of a catalytic core of 3 subunits MT-CO1, MT-CO2 and MT-CO3, encoded in the mitochondrial DNA, and 11 supernumerary subunits COX4I, COX5A, COX5B, COX6A, COX6B, COX6C, COX7A, COX7B, COX7C, COX8 and NDUFA4, which are encoded in the nuclear genome. The complex exists as a monomer or a dimer and forms supercomplexes (SCs) in the inner mitochondrial membrane with NADH-ubiquinone oxidoreductase (complex I, CI) and ubiquinol-cytochrome c oxidoreductase (cytochrome b-c1 complex, complex III, CIII), resulting in different assemblies (supercomplex SCI(1)III(2)IV(1) and megacomplex MCI(2)III(2)IV(2)) (By similarity). Interacts with AFG1L (By similarity). Interacts with RAB5IF (By similarity).</text>
</comment>
<comment type="subcellular location">
    <subcellularLocation>
        <location evidence="1">Mitochondrion inner membrane</location>
        <topology evidence="1">Peripheral membrane protein</topology>
        <orientation evidence="1">Matrix side</orientation>
    </subcellularLocation>
</comment>
<comment type="PTM">
    <text evidence="4">In response to mitochondrial stress, the precursor protein is ubiquitinated by the SIFI complex in the cytoplasm before mitochondrial import, leading to its degradation. Within the SIFI complex, UBR4 initiates ubiquitin chain that are further elongated or branched by KCMF1.</text>
</comment>
<comment type="similarity">
    <text evidence="5">Belongs to the cytochrome c oxidase subunit 5A family.</text>
</comment>
<name>COX5A_EULFU</name>
<sequence length="152" mass="16674">MLGTALRRCAVAAAAASRAGPRGLLHPAPAPGPAAAIQSIRCYSHGSHETDEEFDARWVTYFNKPDIDAWELRKGMNTLVGYDLVPEPKIIDAALRACRRLNDFASAVRILEVVKDKAGPHKEIYPYVIQELRPTLNELGISTPEELGLDKV</sequence>
<proteinExistence type="evidence at transcript level"/>
<reference key="1">
    <citation type="journal article" date="2008" name="BMC Evol. Biol.">
        <title>Molecular evolution of the cytochrome c oxidase subunit 5A gene in primates.</title>
        <authorList>
            <person name="Uddin M."/>
            <person name="Opazo J.C."/>
            <person name="Wildman D.E."/>
            <person name="Sherwood C.C."/>
            <person name="Hof P.R."/>
            <person name="Goodman M."/>
            <person name="Grossman L.I."/>
        </authorList>
    </citation>
    <scope>NUCLEOTIDE SEQUENCE [MRNA]</scope>
</reference>
<feature type="transit peptide" description="Mitochondrion" evidence="1">
    <location>
        <begin position="1"/>
        <end position="43"/>
    </location>
</feature>
<feature type="chain" id="PRO_0000355979" description="Cytochrome c oxidase subunit 5A, mitochondrial">
    <location>
        <begin position="44"/>
        <end position="152"/>
    </location>
</feature>
<feature type="short sequence motif" description="SIFI-degron" evidence="4">
    <location>
        <begin position="2"/>
        <end position="22"/>
    </location>
</feature>
<feature type="modified residue" description="N6-acetyllysine" evidence="3">
    <location>
        <position position="89"/>
    </location>
</feature>
<feature type="modified residue" description="N6-acetyllysine" evidence="3">
    <location>
        <position position="115"/>
    </location>
</feature>
<feature type="modified residue" description="Phosphothreonine" evidence="4">
    <location>
        <position position="143"/>
    </location>
</feature>
<gene>
    <name type="primary">COX5A</name>
</gene>
<accession>B0VYY4</accession>
<evidence type="ECO:0000250" key="1">
    <source>
        <dbReference type="UniProtKB" id="P00426"/>
    </source>
</evidence>
<evidence type="ECO:0000250" key="2">
    <source>
        <dbReference type="UniProtKB" id="P00427"/>
    </source>
</evidence>
<evidence type="ECO:0000250" key="3">
    <source>
        <dbReference type="UniProtKB" id="P12787"/>
    </source>
</evidence>
<evidence type="ECO:0000250" key="4">
    <source>
        <dbReference type="UniProtKB" id="P20674"/>
    </source>
</evidence>
<evidence type="ECO:0000305" key="5"/>
<dbReference type="EMBL" id="DQ987251">
    <property type="protein sequence ID" value="ABK92298.1"/>
    <property type="molecule type" value="mRNA"/>
</dbReference>
<dbReference type="SMR" id="B0VYY4"/>
<dbReference type="UniPathway" id="UPA00705"/>
<dbReference type="GO" id="GO:0005743">
    <property type="term" value="C:mitochondrial inner membrane"/>
    <property type="evidence" value="ECO:0007669"/>
    <property type="project" value="UniProtKB-SubCell"/>
</dbReference>
<dbReference type="GO" id="GO:0045277">
    <property type="term" value="C:respiratory chain complex IV"/>
    <property type="evidence" value="ECO:0007669"/>
    <property type="project" value="InterPro"/>
</dbReference>
<dbReference type="GO" id="GO:0046872">
    <property type="term" value="F:metal ion binding"/>
    <property type="evidence" value="ECO:0007669"/>
    <property type="project" value="UniProtKB-KW"/>
</dbReference>
<dbReference type="GO" id="GO:0006123">
    <property type="term" value="P:mitochondrial electron transport, cytochrome c to oxygen"/>
    <property type="evidence" value="ECO:0007669"/>
    <property type="project" value="InterPro"/>
</dbReference>
<dbReference type="CDD" id="cd00923">
    <property type="entry name" value="Cyt_c_Oxidase_Va"/>
    <property type="match status" value="1"/>
</dbReference>
<dbReference type="FunFam" id="1.25.40.40:FF:000002">
    <property type="entry name" value="cytochrome c oxidase subunit 5A, mitochondrial"/>
    <property type="match status" value="1"/>
</dbReference>
<dbReference type="Gene3D" id="1.25.40.40">
    <property type="entry name" value="Cytochrome c oxidase, subunit Va/VI"/>
    <property type="match status" value="1"/>
</dbReference>
<dbReference type="InterPro" id="IPR003204">
    <property type="entry name" value="Cyt_c_oxidase_su5A/6"/>
</dbReference>
<dbReference type="InterPro" id="IPR036545">
    <property type="entry name" value="Cyt_c_oxidase_su5A/6_sf"/>
</dbReference>
<dbReference type="PANTHER" id="PTHR14200">
    <property type="entry name" value="CYTOCHROME C OXIDASE POLYPEPTIDE"/>
    <property type="match status" value="1"/>
</dbReference>
<dbReference type="PANTHER" id="PTHR14200:SF16">
    <property type="entry name" value="CYTOCHROME C OXIDASE SUBUNIT 5A, MITOCHONDRIAL"/>
    <property type="match status" value="1"/>
</dbReference>
<dbReference type="Pfam" id="PF02284">
    <property type="entry name" value="COX5A"/>
    <property type="match status" value="1"/>
</dbReference>
<dbReference type="SUPFAM" id="SSF48479">
    <property type="entry name" value="Cytochrome c oxidase subunit E"/>
    <property type="match status" value="1"/>
</dbReference>
<keyword id="KW-0007">Acetylation</keyword>
<keyword id="KW-0349">Heme</keyword>
<keyword id="KW-0408">Iron</keyword>
<keyword id="KW-0472">Membrane</keyword>
<keyword id="KW-0479">Metal-binding</keyword>
<keyword id="KW-0496">Mitochondrion</keyword>
<keyword id="KW-0999">Mitochondrion inner membrane</keyword>
<keyword id="KW-0597">Phosphoprotein</keyword>
<keyword id="KW-0809">Transit peptide</keyword>
<keyword id="KW-0832">Ubl conjugation</keyword>